<keyword id="KW-0106">Calcium</keyword>
<keyword id="KW-0109">Calcium transport</keyword>
<keyword id="KW-0903">Direct protein sequencing</keyword>
<keyword id="KW-1015">Disulfide bond</keyword>
<keyword id="KW-0325">Glycoprotein</keyword>
<keyword id="KW-0372">Hormone</keyword>
<keyword id="KW-0406">Ion transport</keyword>
<keyword id="KW-1185">Reference proteome</keyword>
<keyword id="KW-0964">Secreted</keyword>
<keyword id="KW-0732">Signal</keyword>
<keyword id="KW-0813">Transport</keyword>
<evidence type="ECO:0000250" key="1"/>
<evidence type="ECO:0000255" key="2"/>
<evidence type="ECO:0000305" key="3"/>
<protein>
    <recommendedName>
        <fullName>Stanniocalcin</fullName>
        <shortName>STC</shortName>
    </recommendedName>
    <alternativeName>
        <fullName>Corpuscles of Stannius protein</fullName>
        <shortName>CS</shortName>
    </alternativeName>
    <alternativeName>
        <fullName>Hypocalcin</fullName>
    </alternativeName>
    <alternativeName>
        <fullName>Teleocalcin</fullName>
    </alternativeName>
</protein>
<accession>Q08264</accession>
<comment type="function">
    <text>Its primary function is the prevention of hypercalcemia. Upon release into the circulation, it lowers calcium transport by the gills, thereby reducing its rate of influx from the environment into the extracellular compartment. STC also stimulates phosphate reabsorption by renal proximal tubules. The consequence of this action is increased levels of plasma phosphate, which combines with excess calcium and promotes its disposal into bone and scales.</text>
</comment>
<comment type="subunit">
    <text>Homodimer; disulfide-linked.</text>
</comment>
<comment type="subcellular location">
    <subcellularLocation>
        <location>Secreted</location>
    </subcellularLocation>
</comment>
<comment type="tissue specificity">
    <text>Produced and secreted by the corpuscles of Stannius.</text>
</comment>
<comment type="similarity">
    <text evidence="3">Belongs to the stanniocalcin family.</text>
</comment>
<sequence>MLAKFGLCAVFLVLGTAATFDTDPEEASPRRARFSSNSPSDVARCLNGALAVGCGTFACLENSTCDTDGMHDICQLFFHTAATFNTQGKTFVKESLRCIANGVTSKVFQTIRRCGVFQRMISEVQEECYSRLDICGVARSNPEAIGEVVQVPAHFPNRYYSTLLQSLLACDEETVAVVRAGLVARLGPDMETLFQLLQNKHCPQGSNQGPNSAPAGWRWPMGSPPSFKIQPSMRGRDPTHLFARKRSVEALERVME</sequence>
<dbReference type="EMBL" id="S59519">
    <property type="protein sequence ID" value="AAB26419.1"/>
    <property type="molecule type" value="mRNA"/>
</dbReference>
<dbReference type="PIR" id="B60841">
    <property type="entry name" value="B60841"/>
</dbReference>
<dbReference type="PIR" id="I51197">
    <property type="entry name" value="I51197"/>
</dbReference>
<dbReference type="SMR" id="Q08264"/>
<dbReference type="GlyCosmos" id="Q08264">
    <property type="glycosylation" value="1 site, No reported glycans"/>
</dbReference>
<dbReference type="Proteomes" id="UP000694557">
    <property type="component" value="Unplaced"/>
</dbReference>
<dbReference type="GO" id="GO:0005615">
    <property type="term" value="C:extracellular space"/>
    <property type="evidence" value="ECO:0000314"/>
    <property type="project" value="AgBase"/>
</dbReference>
<dbReference type="GO" id="GO:0005179">
    <property type="term" value="F:hormone activity"/>
    <property type="evidence" value="ECO:0007669"/>
    <property type="project" value="UniProtKB-KW"/>
</dbReference>
<dbReference type="GO" id="GO:0006816">
    <property type="term" value="P:calcium ion transport"/>
    <property type="evidence" value="ECO:0007669"/>
    <property type="project" value="UniProtKB-KW"/>
</dbReference>
<dbReference type="GO" id="GO:0006874">
    <property type="term" value="P:intracellular calcium ion homeostasis"/>
    <property type="evidence" value="ECO:0007669"/>
    <property type="project" value="TreeGrafter"/>
</dbReference>
<dbReference type="GO" id="GO:0051926">
    <property type="term" value="P:negative regulation of calcium ion transport"/>
    <property type="evidence" value="ECO:0000314"/>
    <property type="project" value="UniProtKB"/>
</dbReference>
<dbReference type="InterPro" id="IPR004978">
    <property type="entry name" value="Stanniocalcin"/>
</dbReference>
<dbReference type="PANTHER" id="PTHR11245">
    <property type="entry name" value="STANNIOCALCIN"/>
    <property type="match status" value="1"/>
</dbReference>
<dbReference type="PANTHER" id="PTHR11245:SF7">
    <property type="entry name" value="STANNIOCALCIN"/>
    <property type="match status" value="1"/>
</dbReference>
<dbReference type="Pfam" id="PF03298">
    <property type="entry name" value="Stanniocalcin"/>
    <property type="match status" value="1"/>
</dbReference>
<gene>
    <name type="primary">stc</name>
</gene>
<proteinExistence type="evidence at protein level"/>
<feature type="signal peptide" evidence="2">
    <location>
        <begin position="1"/>
        <end position="18"/>
    </location>
</feature>
<feature type="propeptide" id="PRO_0000033310" evidence="1">
    <location>
        <begin position="19"/>
        <end position="33"/>
    </location>
</feature>
<feature type="chain" id="PRO_0000033311" description="Stanniocalcin">
    <location>
        <begin position="34"/>
        <end position="256"/>
    </location>
</feature>
<feature type="glycosylation site" description="N-linked (GlcNAc...) asparagine">
    <location>
        <position position="62"/>
    </location>
</feature>
<organism>
    <name type="scientific">Oncorhynchus kisutch</name>
    <name type="common">Coho salmon</name>
    <name type="synonym">Salmo kisutch</name>
    <dbReference type="NCBI Taxonomy" id="8019"/>
    <lineage>
        <taxon>Eukaryota</taxon>
        <taxon>Metazoa</taxon>
        <taxon>Chordata</taxon>
        <taxon>Craniata</taxon>
        <taxon>Vertebrata</taxon>
        <taxon>Euteleostomi</taxon>
        <taxon>Actinopterygii</taxon>
        <taxon>Neopterygii</taxon>
        <taxon>Teleostei</taxon>
        <taxon>Protacanthopterygii</taxon>
        <taxon>Salmoniformes</taxon>
        <taxon>Salmonidae</taxon>
        <taxon>Salmoninae</taxon>
        <taxon>Oncorhynchus</taxon>
    </lineage>
</organism>
<reference key="1">
    <citation type="journal article" date="1992" name="Mol. Cell. Endocrinol.">
        <title>Molecular cloning and cDNA sequence analysis of coho salmon stanniocalcin.</title>
        <authorList>
            <person name="Wagner G.F."/>
            <person name="Dimattia G.E."/>
            <person name="Davie J.R."/>
            <person name="Copp D.H."/>
            <person name="Friesen H.G."/>
        </authorList>
    </citation>
    <scope>NUCLEOTIDE SEQUENCE [MRNA]</scope>
</reference>
<reference key="2">
    <citation type="journal article" date="1988" name="Gen. Comp. Endocrinol.">
        <title>Comparative biochemistry and physiology of teleocalcin from sockeye and coho salmon.</title>
        <authorList>
            <person name="Wagner G.F."/>
            <person name="Fenwick J.C."/>
            <person name="Park C.M."/>
            <person name="Milliken C."/>
            <person name="Copp D.H."/>
            <person name="Friesen H.G."/>
        </authorList>
    </citation>
    <scope>PROTEIN SEQUENCE OF 34-73</scope>
</reference>
<name>STC_ONCKI</name>